<evidence type="ECO:0000255" key="1">
    <source>
        <dbReference type="HAMAP-Rule" id="MF_00607"/>
    </source>
</evidence>
<reference key="1">
    <citation type="journal article" date="2007" name="PLoS Genet.">
        <title>A tale of two oxidation states: bacterial colonization of arsenic-rich environments.</title>
        <authorList>
            <person name="Muller D."/>
            <person name="Medigue C."/>
            <person name="Koechler S."/>
            <person name="Barbe V."/>
            <person name="Barakat M."/>
            <person name="Talla E."/>
            <person name="Bonnefoy V."/>
            <person name="Krin E."/>
            <person name="Arsene-Ploetze F."/>
            <person name="Carapito C."/>
            <person name="Chandler M."/>
            <person name="Cournoyer B."/>
            <person name="Cruveiller S."/>
            <person name="Dossat C."/>
            <person name="Duval S."/>
            <person name="Heymann M."/>
            <person name="Leize E."/>
            <person name="Lieutaud A."/>
            <person name="Lievremont D."/>
            <person name="Makita Y."/>
            <person name="Mangenot S."/>
            <person name="Nitschke W."/>
            <person name="Ortet P."/>
            <person name="Perdrial N."/>
            <person name="Schoepp B."/>
            <person name="Siguier P."/>
            <person name="Simeonova D.D."/>
            <person name="Rouy Z."/>
            <person name="Segurens B."/>
            <person name="Turlin E."/>
            <person name="Vallenet D."/>
            <person name="van Dorsselaer A."/>
            <person name="Weiss S."/>
            <person name="Weissenbach J."/>
            <person name="Lett M.-C."/>
            <person name="Danchin A."/>
            <person name="Bertin P.N."/>
        </authorList>
    </citation>
    <scope>NUCLEOTIDE SEQUENCE [LARGE SCALE GENOMIC DNA]</scope>
    <source>
        <strain>ULPAs1</strain>
    </source>
</reference>
<sequence length="255" mass="28877">MKHIPRKRFGQNFLTDDGVLHNIILAIDPQPQDTMVEIGPGLAAMTRLLLDGVNQMHVVELDRDLVERLKKTFDPKKLIIHSADALQFDFSTIPVPAGSKLRVVGNLPYNISSPLLFHLAEMAPHVQDQHFMLQKEVVERMVAEPGSKTYGRLSVMLQWRYHMELMFIVPPTAFDPPPRVESAIVRMIPIEKPLPCDQTKLEQVVLKAFSQRRKVIRNCLAGMFSEADLIEAGINPQMRPETISLAQYVALANRL</sequence>
<organism>
    <name type="scientific">Herminiimonas arsenicoxydans</name>
    <dbReference type="NCBI Taxonomy" id="204773"/>
    <lineage>
        <taxon>Bacteria</taxon>
        <taxon>Pseudomonadati</taxon>
        <taxon>Pseudomonadota</taxon>
        <taxon>Betaproteobacteria</taxon>
        <taxon>Burkholderiales</taxon>
        <taxon>Oxalobacteraceae</taxon>
        <taxon>Herminiimonas</taxon>
    </lineage>
</organism>
<gene>
    <name evidence="1" type="primary">rsmA</name>
    <name evidence="1" type="synonym">ksgA</name>
    <name type="ordered locus">HEAR0369</name>
</gene>
<comment type="function">
    <text evidence="1">Specifically dimethylates two adjacent adenosines (A1518 and A1519) in the loop of a conserved hairpin near the 3'-end of 16S rRNA in the 30S particle. May play a critical role in biogenesis of 30S subunits.</text>
</comment>
<comment type="catalytic activity">
    <reaction evidence="1">
        <text>adenosine(1518)/adenosine(1519) in 16S rRNA + 4 S-adenosyl-L-methionine = N(6)-dimethyladenosine(1518)/N(6)-dimethyladenosine(1519) in 16S rRNA + 4 S-adenosyl-L-homocysteine + 4 H(+)</text>
        <dbReference type="Rhea" id="RHEA:19609"/>
        <dbReference type="Rhea" id="RHEA-COMP:10232"/>
        <dbReference type="Rhea" id="RHEA-COMP:10233"/>
        <dbReference type="ChEBI" id="CHEBI:15378"/>
        <dbReference type="ChEBI" id="CHEBI:57856"/>
        <dbReference type="ChEBI" id="CHEBI:59789"/>
        <dbReference type="ChEBI" id="CHEBI:74411"/>
        <dbReference type="ChEBI" id="CHEBI:74493"/>
        <dbReference type="EC" id="2.1.1.182"/>
    </reaction>
</comment>
<comment type="subcellular location">
    <subcellularLocation>
        <location evidence="1">Cytoplasm</location>
    </subcellularLocation>
</comment>
<comment type="similarity">
    <text evidence="1">Belongs to the class I-like SAM-binding methyltransferase superfamily. rRNA adenine N(6)-methyltransferase family. RsmA subfamily.</text>
</comment>
<keyword id="KW-0963">Cytoplasm</keyword>
<keyword id="KW-0489">Methyltransferase</keyword>
<keyword id="KW-1185">Reference proteome</keyword>
<keyword id="KW-0694">RNA-binding</keyword>
<keyword id="KW-0698">rRNA processing</keyword>
<keyword id="KW-0949">S-adenosyl-L-methionine</keyword>
<keyword id="KW-0808">Transferase</keyword>
<protein>
    <recommendedName>
        <fullName evidence="1">Ribosomal RNA small subunit methyltransferase A</fullName>
        <ecNumber evidence="1">2.1.1.182</ecNumber>
    </recommendedName>
    <alternativeName>
        <fullName evidence="1">16S rRNA (adenine(1518)-N(6)/adenine(1519)-N(6))-dimethyltransferase</fullName>
    </alternativeName>
    <alternativeName>
        <fullName evidence="1">16S rRNA dimethyladenosine transferase</fullName>
    </alternativeName>
    <alternativeName>
        <fullName evidence="1">16S rRNA dimethylase</fullName>
    </alternativeName>
    <alternativeName>
        <fullName evidence="1">S-adenosylmethionine-6-N', N'-adenosyl(rRNA) dimethyltransferase</fullName>
    </alternativeName>
</protein>
<accession>A4G256</accession>
<name>RSMA_HERAR</name>
<dbReference type="EC" id="2.1.1.182" evidence="1"/>
<dbReference type="EMBL" id="CU207211">
    <property type="protein sequence ID" value="CAL60593.1"/>
    <property type="molecule type" value="Genomic_DNA"/>
</dbReference>
<dbReference type="SMR" id="A4G256"/>
<dbReference type="STRING" id="204773.HEAR0369"/>
<dbReference type="KEGG" id="har:HEAR0369"/>
<dbReference type="eggNOG" id="COG0030">
    <property type="taxonomic scope" value="Bacteria"/>
</dbReference>
<dbReference type="HOGENOM" id="CLU_041220_0_1_4"/>
<dbReference type="OrthoDB" id="9814755at2"/>
<dbReference type="Proteomes" id="UP000006697">
    <property type="component" value="Chromosome"/>
</dbReference>
<dbReference type="GO" id="GO:0005829">
    <property type="term" value="C:cytosol"/>
    <property type="evidence" value="ECO:0007669"/>
    <property type="project" value="TreeGrafter"/>
</dbReference>
<dbReference type="GO" id="GO:0052908">
    <property type="term" value="F:16S rRNA (adenine(1518)-N(6)/adenine(1519)-N(6))-dimethyltransferase activity"/>
    <property type="evidence" value="ECO:0007669"/>
    <property type="project" value="UniProtKB-EC"/>
</dbReference>
<dbReference type="GO" id="GO:0003723">
    <property type="term" value="F:RNA binding"/>
    <property type="evidence" value="ECO:0007669"/>
    <property type="project" value="UniProtKB-KW"/>
</dbReference>
<dbReference type="FunFam" id="1.10.8.100:FF:000001">
    <property type="entry name" value="Ribosomal RNA small subunit methyltransferase A"/>
    <property type="match status" value="1"/>
</dbReference>
<dbReference type="Gene3D" id="1.10.8.100">
    <property type="entry name" value="Ribosomal RNA adenine dimethylase-like, domain 2"/>
    <property type="match status" value="1"/>
</dbReference>
<dbReference type="Gene3D" id="3.40.50.150">
    <property type="entry name" value="Vaccinia Virus protein VP39"/>
    <property type="match status" value="1"/>
</dbReference>
<dbReference type="HAMAP" id="MF_00607">
    <property type="entry name" value="16SrRNA_methyltr_A"/>
    <property type="match status" value="1"/>
</dbReference>
<dbReference type="InterPro" id="IPR001737">
    <property type="entry name" value="KsgA/Erm"/>
</dbReference>
<dbReference type="InterPro" id="IPR023165">
    <property type="entry name" value="rRNA_Ade_diMease-like_C"/>
</dbReference>
<dbReference type="InterPro" id="IPR020596">
    <property type="entry name" value="rRNA_Ade_Mease_Trfase_CS"/>
</dbReference>
<dbReference type="InterPro" id="IPR020598">
    <property type="entry name" value="rRNA_Ade_methylase_Trfase_N"/>
</dbReference>
<dbReference type="InterPro" id="IPR011530">
    <property type="entry name" value="rRNA_adenine_dimethylase"/>
</dbReference>
<dbReference type="InterPro" id="IPR029063">
    <property type="entry name" value="SAM-dependent_MTases_sf"/>
</dbReference>
<dbReference type="NCBIfam" id="TIGR00755">
    <property type="entry name" value="ksgA"/>
    <property type="match status" value="1"/>
</dbReference>
<dbReference type="PANTHER" id="PTHR11727">
    <property type="entry name" value="DIMETHYLADENOSINE TRANSFERASE"/>
    <property type="match status" value="1"/>
</dbReference>
<dbReference type="PANTHER" id="PTHR11727:SF7">
    <property type="entry name" value="DIMETHYLADENOSINE TRANSFERASE-RELATED"/>
    <property type="match status" value="1"/>
</dbReference>
<dbReference type="Pfam" id="PF00398">
    <property type="entry name" value="RrnaAD"/>
    <property type="match status" value="1"/>
</dbReference>
<dbReference type="SMART" id="SM00650">
    <property type="entry name" value="rADc"/>
    <property type="match status" value="1"/>
</dbReference>
<dbReference type="SUPFAM" id="SSF53335">
    <property type="entry name" value="S-adenosyl-L-methionine-dependent methyltransferases"/>
    <property type="match status" value="1"/>
</dbReference>
<dbReference type="PROSITE" id="PS01131">
    <property type="entry name" value="RRNA_A_DIMETH"/>
    <property type="match status" value="1"/>
</dbReference>
<dbReference type="PROSITE" id="PS51689">
    <property type="entry name" value="SAM_RNA_A_N6_MT"/>
    <property type="match status" value="1"/>
</dbReference>
<proteinExistence type="inferred from homology"/>
<feature type="chain" id="PRO_1000130284" description="Ribosomal RNA small subunit methyltransferase A">
    <location>
        <begin position="1"/>
        <end position="255"/>
    </location>
</feature>
<feature type="binding site" evidence="1">
    <location>
        <position position="12"/>
    </location>
    <ligand>
        <name>S-adenosyl-L-methionine</name>
        <dbReference type="ChEBI" id="CHEBI:59789"/>
    </ligand>
</feature>
<feature type="binding site" evidence="1">
    <location>
        <position position="14"/>
    </location>
    <ligand>
        <name>S-adenosyl-L-methionine</name>
        <dbReference type="ChEBI" id="CHEBI:59789"/>
    </ligand>
</feature>
<feature type="binding site" evidence="1">
    <location>
        <position position="39"/>
    </location>
    <ligand>
        <name>S-adenosyl-L-methionine</name>
        <dbReference type="ChEBI" id="CHEBI:59789"/>
    </ligand>
</feature>
<feature type="binding site" evidence="1">
    <location>
        <position position="60"/>
    </location>
    <ligand>
        <name>S-adenosyl-L-methionine</name>
        <dbReference type="ChEBI" id="CHEBI:59789"/>
    </ligand>
</feature>
<feature type="binding site" evidence="1">
    <location>
        <position position="84"/>
    </location>
    <ligand>
        <name>S-adenosyl-L-methionine</name>
        <dbReference type="ChEBI" id="CHEBI:59789"/>
    </ligand>
</feature>
<feature type="binding site" evidence="1">
    <location>
        <position position="106"/>
    </location>
    <ligand>
        <name>S-adenosyl-L-methionine</name>
        <dbReference type="ChEBI" id="CHEBI:59789"/>
    </ligand>
</feature>